<protein>
    <recommendedName>
        <fullName>Tyrosinase-like protein 2</fullName>
        <ecNumber>1.14.18.-</ecNumber>
    </recommendedName>
    <alternativeName>
        <fullName>Tyrosinase 2</fullName>
    </alternativeName>
</protein>
<organism>
    <name type="scientific">Margaritifera margaritifera</name>
    <name type="common">Freshwater pearl mussel</name>
    <dbReference type="NCBI Taxonomy" id="102329"/>
    <lineage>
        <taxon>Eukaryota</taxon>
        <taxon>Metazoa</taxon>
        <taxon>Spiralia</taxon>
        <taxon>Lophotrochozoa</taxon>
        <taxon>Mollusca</taxon>
        <taxon>Bivalvia</taxon>
        <taxon>Autobranchia</taxon>
        <taxon>Pteriomorphia</taxon>
        <taxon>Pterioida</taxon>
        <taxon>Pterioidea</taxon>
        <taxon>Pteriidae</taxon>
        <taxon>Pinctada</taxon>
    </lineage>
</organism>
<dbReference type="EC" id="1.14.18.-"/>
<dbReference type="EMBL" id="HE610378">
    <property type="protein sequence ID" value="CCE46152.1"/>
    <property type="molecule type" value="mRNA"/>
</dbReference>
<dbReference type="SMR" id="H2A0L1"/>
<dbReference type="GO" id="GO:0005576">
    <property type="term" value="C:extracellular region"/>
    <property type="evidence" value="ECO:0007669"/>
    <property type="project" value="UniProtKB-SubCell"/>
</dbReference>
<dbReference type="GO" id="GO:0046872">
    <property type="term" value="F:metal ion binding"/>
    <property type="evidence" value="ECO:0007669"/>
    <property type="project" value="UniProtKB-KW"/>
</dbReference>
<dbReference type="GO" id="GO:0016491">
    <property type="term" value="F:oxidoreductase activity"/>
    <property type="evidence" value="ECO:0007669"/>
    <property type="project" value="UniProtKB-KW"/>
</dbReference>
<dbReference type="Gene3D" id="1.10.1280.10">
    <property type="entry name" value="Di-copper center containing domain from catechol oxidase"/>
    <property type="match status" value="1"/>
</dbReference>
<dbReference type="InterPro" id="IPR008922">
    <property type="entry name" value="Di-copper_centre_dom_sf"/>
</dbReference>
<dbReference type="InterPro" id="IPR050316">
    <property type="entry name" value="Tyrosinase/Hemocyanin"/>
</dbReference>
<dbReference type="InterPro" id="IPR002227">
    <property type="entry name" value="Tyrosinase_Cu-bd"/>
</dbReference>
<dbReference type="PANTHER" id="PTHR11474">
    <property type="entry name" value="TYROSINASE FAMILY MEMBER"/>
    <property type="match status" value="1"/>
</dbReference>
<dbReference type="PANTHER" id="PTHR11474:SF126">
    <property type="entry name" value="TYROSINASE-LIKE PROTEIN TYR-1-RELATED"/>
    <property type="match status" value="1"/>
</dbReference>
<dbReference type="Pfam" id="PF00264">
    <property type="entry name" value="Tyrosinase"/>
    <property type="match status" value="1"/>
</dbReference>
<dbReference type="PRINTS" id="PR00092">
    <property type="entry name" value="TYROSINASE"/>
</dbReference>
<dbReference type="SUPFAM" id="SSF48056">
    <property type="entry name" value="Di-copper centre-containing domain"/>
    <property type="match status" value="1"/>
</dbReference>
<dbReference type="PROSITE" id="PS00497">
    <property type="entry name" value="TYROSINASE_1"/>
    <property type="match status" value="1"/>
</dbReference>
<dbReference type="PROSITE" id="PS00498">
    <property type="entry name" value="TYROSINASE_2"/>
    <property type="match status" value="1"/>
</dbReference>
<keyword id="KW-0186">Copper</keyword>
<keyword id="KW-0903">Direct protein sequencing</keyword>
<keyword id="KW-0479">Metal-binding</keyword>
<keyword id="KW-0560">Oxidoreductase</keyword>
<keyword id="KW-0964">Secreted</keyword>
<keyword id="KW-0732">Signal</keyword>
<reference evidence="5" key="1">
    <citation type="journal article" date="2010" name="BMC Genomics">
        <title>Transcriptome and proteome analysis of Pinctada margaritifera calcifying mantle and shell: focus on biomineralization.</title>
        <authorList>
            <person name="Joubert C."/>
            <person name="Piquemal D."/>
            <person name="Marie B."/>
            <person name="Manchon L."/>
            <person name="Pierrat F."/>
            <person name="Zanella-Cleon I."/>
            <person name="Cochennec-Laureau N."/>
            <person name="Gueguen Y."/>
            <person name="Montagnani C."/>
        </authorList>
    </citation>
    <scope>NUCLEOTIDE SEQUENCE [MRNA]</scope>
    <scope>IDENTIFICATION</scope>
    <source>
        <tissue>Mantle</tissue>
    </source>
</reference>
<reference key="2">
    <citation type="journal article" date="2012" name="Proc. Natl. Acad. Sci. U.S.A.">
        <title>Different secretory repertoires control the biomineralization processes of prism and nacre deposition of the pearl oyster shell.</title>
        <authorList>
            <person name="Marie B."/>
            <person name="Joubert C."/>
            <person name="Tayale A."/>
            <person name="Zanella-Cleon I."/>
            <person name="Belliard C."/>
            <person name="Piquemal D."/>
            <person name="Cochennec-Laureau N."/>
            <person name="Marin F."/>
            <person name="Gueguen Y."/>
            <person name="Montagnani C."/>
        </authorList>
    </citation>
    <scope>PROTEIN SEQUENCE OF 112-126; 130-146; 165-172; 215-239 AND 370-384</scope>
    <scope>SUBCELLULAR LOCATION</scope>
    <scope>TISSUE SPECIFICITY</scope>
    <source>
        <tissue>Shell</tissue>
    </source>
</reference>
<proteinExistence type="evidence at protein level"/>
<evidence type="ECO:0000250" key="1">
    <source>
        <dbReference type="UniProtKB" id="P06845"/>
    </source>
</evidence>
<evidence type="ECO:0000250" key="2">
    <source>
        <dbReference type="UniProtKB" id="Q9ZP19"/>
    </source>
</evidence>
<evidence type="ECO:0000255" key="3"/>
<evidence type="ECO:0000269" key="4">
    <source>
    </source>
</evidence>
<evidence type="ECO:0000305" key="5"/>
<feature type="signal peptide" evidence="3">
    <location>
        <begin position="1"/>
        <end position="22"/>
    </location>
</feature>
<feature type="chain" id="PRO_0000417980" description="Tyrosinase-like protein 2" evidence="3">
    <location>
        <begin position="23"/>
        <end position="456"/>
    </location>
</feature>
<feature type="binding site" evidence="2">
    <location>
        <position position="145"/>
    </location>
    <ligand>
        <name>Cu cation</name>
        <dbReference type="ChEBI" id="CHEBI:23378"/>
        <label>A</label>
    </ligand>
</feature>
<feature type="binding site" evidence="1">
    <location>
        <position position="154"/>
    </location>
    <ligand>
        <name>Cu cation</name>
        <dbReference type="ChEBI" id="CHEBI:23378"/>
        <label>A</label>
    </ligand>
</feature>
<feature type="binding site" evidence="1">
    <location>
        <position position="163"/>
    </location>
    <ligand>
        <name>Cu cation</name>
        <dbReference type="ChEBI" id="CHEBI:23378"/>
        <label>A</label>
    </ligand>
</feature>
<feature type="binding site" evidence="1">
    <location>
        <position position="295"/>
    </location>
    <ligand>
        <name>Cu cation</name>
        <dbReference type="ChEBI" id="CHEBI:23378"/>
        <label>B</label>
    </ligand>
</feature>
<feature type="binding site" evidence="1">
    <location>
        <position position="299"/>
    </location>
    <ligand>
        <name>Cu cation</name>
        <dbReference type="ChEBI" id="CHEBI:23378"/>
        <label>B</label>
    </ligand>
</feature>
<feature type="binding site" evidence="1">
    <location>
        <position position="322"/>
    </location>
    <ligand>
        <name>Cu cation</name>
        <dbReference type="ChEBI" id="CHEBI:23378"/>
        <label>B</label>
    </ligand>
</feature>
<name>TYRO2_PINMG</name>
<accession>H2A0L1</accession>
<comment type="cofactor">
    <cofactor evidence="1">
        <name>Cu(2+)</name>
        <dbReference type="ChEBI" id="CHEBI:29036"/>
    </cofactor>
    <text evidence="1">Binds 2 copper ions per subunit.</text>
</comment>
<comment type="subcellular location">
    <subcellularLocation>
        <location evidence="4">Secreted</location>
    </subcellularLocation>
</comment>
<comment type="tissue specificity">
    <text evidence="4">Prismatic layer of shell (at protein level).</text>
</comment>
<sequence length="456" mass="53060">MNTMALFGKVILLQFLIGVGFCMLMQDPKRNDTKSTYATCFRSQPQGNEPASPDCVKAFMAYAEDMKNIFHFTKEQINYLWSLERETQSLFHNHRRRKRQAVFLPVRKECRLLSEFERQNLFYTIRSLKMDTSNPNEYDTLANLHRGAVQPHAHDGSNFLGWHRVYLMYYERALRRIRGDVTLCFWDTTMDFNLGMDNWEYTAVFSSDFFGNRRGQVITGPFRDWPLPPGLTESDYLYRNMTRGRGMPFDSRAASSIFYNPNTIIHSTVTWEGFGFDTITNSQGQTRNITIEGEHNNVHNWVGGAMEFLDPAPQDPVFFFHHCYIDYVWERFREKMRRYFRDPTTDYPGHGNETLHDANYPMIGFEWFRNIDGYSDYFIQNVYRYESPTCQACYYSPYTVCGQGNQCIARMNYPGTEIEEGPQVPNSPVVAFSVAGGTMLMSAFNGRGFIATSNSE</sequence>